<sequence length="355" mass="38381">MKKIKVLIVDDSAVVRQTMADILASDPHIEVMAPAADPFIAAERMREQVPDVITLDVEMPRMDGITFLKKIMSQHPIPVVMCSTLTESGSETAVKALEYGAVEIIQKPKLGTKQFLEESRVRICDAVKAASQARLRKITPRTGKEIAPKLSADVILEKPGSKAMIQTTEKVVVVGASTGGTEALRVFLEALPADSPPIVIVQHMPEGFTRAFAQRLDGICRITVKEAADNDTVMRGRALIAPGNRHTLLKRSGARYYVEIKDGPLVSRHRPSVDVLFRSAARYAGKNAVGVIMTGMGDDGASGMKEMRDAGAVTIAQDEATCIVFGMPNEAIKRGGADRVIPLDTIAREVLRLCG</sequence>
<accession>Q39SY1</accession>
<organism>
    <name type="scientific">Geobacter metallireducens (strain ATCC 53774 / DSM 7210 / GS-15)</name>
    <dbReference type="NCBI Taxonomy" id="269799"/>
    <lineage>
        <taxon>Bacteria</taxon>
        <taxon>Pseudomonadati</taxon>
        <taxon>Thermodesulfobacteriota</taxon>
        <taxon>Desulfuromonadia</taxon>
        <taxon>Geobacterales</taxon>
        <taxon>Geobacteraceae</taxon>
        <taxon>Geobacter</taxon>
    </lineage>
</organism>
<name>CHEB3_GEOMG</name>
<protein>
    <recommendedName>
        <fullName evidence="1">Protein-glutamate methylesterase/protein-glutamine glutaminase 3</fullName>
        <ecNumber evidence="1">3.1.1.61</ecNumber>
        <ecNumber evidence="1">3.5.1.44</ecNumber>
    </recommendedName>
</protein>
<reference key="1">
    <citation type="journal article" date="2009" name="BMC Microbiol.">
        <title>The genome sequence of Geobacter metallireducens: features of metabolism, physiology and regulation common and dissimilar to Geobacter sulfurreducens.</title>
        <authorList>
            <person name="Aklujkar M."/>
            <person name="Krushkal J."/>
            <person name="DiBartolo G."/>
            <person name="Lapidus A."/>
            <person name="Land M.L."/>
            <person name="Lovley D.R."/>
        </authorList>
    </citation>
    <scope>NUCLEOTIDE SEQUENCE [LARGE SCALE GENOMIC DNA]</scope>
    <source>
        <strain>ATCC 53774 / DSM 7210 / GS-15</strain>
    </source>
</reference>
<feature type="chain" id="PRO_0000264278" description="Protein-glutamate methylesterase/protein-glutamine glutaminase 3">
    <location>
        <begin position="1"/>
        <end position="355"/>
    </location>
</feature>
<feature type="domain" description="Response regulatory" evidence="1">
    <location>
        <begin position="5"/>
        <end position="122"/>
    </location>
</feature>
<feature type="domain" description="CheB-type methylesterase" evidence="1">
    <location>
        <begin position="165"/>
        <end position="355"/>
    </location>
</feature>
<feature type="active site" evidence="1">
    <location>
        <position position="177"/>
    </location>
</feature>
<feature type="active site" evidence="1">
    <location>
        <position position="203"/>
    </location>
</feature>
<feature type="active site" evidence="1">
    <location>
        <position position="299"/>
    </location>
</feature>
<feature type="modified residue" description="4-aspartylphosphate" evidence="1">
    <location>
        <position position="56"/>
    </location>
</feature>
<dbReference type="EC" id="3.1.1.61" evidence="1"/>
<dbReference type="EC" id="3.5.1.44" evidence="1"/>
<dbReference type="EMBL" id="CP000148">
    <property type="protein sequence ID" value="ABB32643.1"/>
    <property type="molecule type" value="Genomic_DNA"/>
</dbReference>
<dbReference type="RefSeq" id="WP_004512482.1">
    <property type="nucleotide sequence ID" value="NC_007517.1"/>
</dbReference>
<dbReference type="SMR" id="Q39SY1"/>
<dbReference type="STRING" id="269799.Gmet_2418"/>
<dbReference type="KEGG" id="gme:Gmet_2418"/>
<dbReference type="eggNOG" id="COG2201">
    <property type="taxonomic scope" value="Bacteria"/>
</dbReference>
<dbReference type="HOGENOM" id="CLU_000445_51_0_7"/>
<dbReference type="Proteomes" id="UP000007073">
    <property type="component" value="Chromosome"/>
</dbReference>
<dbReference type="GO" id="GO:0005737">
    <property type="term" value="C:cytoplasm"/>
    <property type="evidence" value="ECO:0007669"/>
    <property type="project" value="UniProtKB-SubCell"/>
</dbReference>
<dbReference type="GO" id="GO:0000156">
    <property type="term" value="F:phosphorelay response regulator activity"/>
    <property type="evidence" value="ECO:0007669"/>
    <property type="project" value="InterPro"/>
</dbReference>
<dbReference type="GO" id="GO:0008984">
    <property type="term" value="F:protein-glutamate methylesterase activity"/>
    <property type="evidence" value="ECO:0007669"/>
    <property type="project" value="UniProtKB-UniRule"/>
</dbReference>
<dbReference type="GO" id="GO:0050568">
    <property type="term" value="F:protein-glutamine glutaminase activity"/>
    <property type="evidence" value="ECO:0007669"/>
    <property type="project" value="UniProtKB-UniRule"/>
</dbReference>
<dbReference type="GO" id="GO:0006935">
    <property type="term" value="P:chemotaxis"/>
    <property type="evidence" value="ECO:0007669"/>
    <property type="project" value="UniProtKB-UniRule"/>
</dbReference>
<dbReference type="CDD" id="cd16432">
    <property type="entry name" value="CheB_Rec"/>
    <property type="match status" value="1"/>
</dbReference>
<dbReference type="CDD" id="cd17541">
    <property type="entry name" value="REC_CheB-like"/>
    <property type="match status" value="1"/>
</dbReference>
<dbReference type="Gene3D" id="3.40.50.2300">
    <property type="match status" value="1"/>
</dbReference>
<dbReference type="Gene3D" id="3.40.50.180">
    <property type="entry name" value="Methylesterase CheB, C-terminal domain"/>
    <property type="match status" value="1"/>
</dbReference>
<dbReference type="HAMAP" id="MF_00099">
    <property type="entry name" value="CheB_chemtxs"/>
    <property type="match status" value="1"/>
</dbReference>
<dbReference type="InterPro" id="IPR008248">
    <property type="entry name" value="CheB-like"/>
</dbReference>
<dbReference type="InterPro" id="IPR035909">
    <property type="entry name" value="CheB_C"/>
</dbReference>
<dbReference type="InterPro" id="IPR011006">
    <property type="entry name" value="CheY-like_superfamily"/>
</dbReference>
<dbReference type="InterPro" id="IPR000673">
    <property type="entry name" value="Sig_transdc_resp-reg_Me-estase"/>
</dbReference>
<dbReference type="InterPro" id="IPR001789">
    <property type="entry name" value="Sig_transdc_resp-reg_receiver"/>
</dbReference>
<dbReference type="NCBIfam" id="NF001965">
    <property type="entry name" value="PRK00742.1"/>
    <property type="match status" value="1"/>
</dbReference>
<dbReference type="NCBIfam" id="NF009206">
    <property type="entry name" value="PRK12555.1"/>
    <property type="match status" value="1"/>
</dbReference>
<dbReference type="PANTHER" id="PTHR42872">
    <property type="entry name" value="PROTEIN-GLUTAMATE METHYLESTERASE/PROTEIN-GLUTAMINE GLUTAMINASE"/>
    <property type="match status" value="1"/>
</dbReference>
<dbReference type="PANTHER" id="PTHR42872:SF6">
    <property type="entry name" value="PROTEIN-GLUTAMATE METHYLESTERASE_PROTEIN-GLUTAMINE GLUTAMINASE"/>
    <property type="match status" value="1"/>
</dbReference>
<dbReference type="Pfam" id="PF01339">
    <property type="entry name" value="CheB_methylest"/>
    <property type="match status" value="1"/>
</dbReference>
<dbReference type="Pfam" id="PF00072">
    <property type="entry name" value="Response_reg"/>
    <property type="match status" value="1"/>
</dbReference>
<dbReference type="PIRSF" id="PIRSF000876">
    <property type="entry name" value="RR_chemtxs_CheB"/>
    <property type="match status" value="1"/>
</dbReference>
<dbReference type="SMART" id="SM00448">
    <property type="entry name" value="REC"/>
    <property type="match status" value="1"/>
</dbReference>
<dbReference type="SUPFAM" id="SSF52172">
    <property type="entry name" value="CheY-like"/>
    <property type="match status" value="1"/>
</dbReference>
<dbReference type="SUPFAM" id="SSF52738">
    <property type="entry name" value="Methylesterase CheB, C-terminal domain"/>
    <property type="match status" value="1"/>
</dbReference>
<dbReference type="PROSITE" id="PS50122">
    <property type="entry name" value="CHEB"/>
    <property type="match status" value="1"/>
</dbReference>
<dbReference type="PROSITE" id="PS50110">
    <property type="entry name" value="RESPONSE_REGULATORY"/>
    <property type="match status" value="1"/>
</dbReference>
<gene>
    <name evidence="1" type="primary">cheB3</name>
    <name type="ordered locus">Gmet_2418</name>
</gene>
<proteinExistence type="inferred from homology"/>
<evidence type="ECO:0000255" key="1">
    <source>
        <dbReference type="HAMAP-Rule" id="MF_00099"/>
    </source>
</evidence>
<keyword id="KW-0145">Chemotaxis</keyword>
<keyword id="KW-0963">Cytoplasm</keyword>
<keyword id="KW-0378">Hydrolase</keyword>
<keyword id="KW-0597">Phosphoprotein</keyword>
<keyword id="KW-1185">Reference proteome</keyword>
<comment type="function">
    <text evidence="1">Involved in chemotaxis. Part of a chemotaxis signal transduction system that modulates chemotaxis in response to various stimuli. Catalyzes the demethylation of specific methylglutamate residues introduced into the chemoreceptors (methyl-accepting chemotaxis proteins or MCP) by CheR. Also mediates the irreversible deamidation of specific glutamine residues to glutamic acid.</text>
</comment>
<comment type="catalytic activity">
    <reaction evidence="1">
        <text>[protein]-L-glutamate 5-O-methyl ester + H2O = L-glutamyl-[protein] + methanol + H(+)</text>
        <dbReference type="Rhea" id="RHEA:23236"/>
        <dbReference type="Rhea" id="RHEA-COMP:10208"/>
        <dbReference type="Rhea" id="RHEA-COMP:10311"/>
        <dbReference type="ChEBI" id="CHEBI:15377"/>
        <dbReference type="ChEBI" id="CHEBI:15378"/>
        <dbReference type="ChEBI" id="CHEBI:17790"/>
        <dbReference type="ChEBI" id="CHEBI:29973"/>
        <dbReference type="ChEBI" id="CHEBI:82795"/>
        <dbReference type="EC" id="3.1.1.61"/>
    </reaction>
</comment>
<comment type="catalytic activity">
    <reaction evidence="1">
        <text>L-glutaminyl-[protein] + H2O = L-glutamyl-[protein] + NH4(+)</text>
        <dbReference type="Rhea" id="RHEA:16441"/>
        <dbReference type="Rhea" id="RHEA-COMP:10207"/>
        <dbReference type="Rhea" id="RHEA-COMP:10208"/>
        <dbReference type="ChEBI" id="CHEBI:15377"/>
        <dbReference type="ChEBI" id="CHEBI:28938"/>
        <dbReference type="ChEBI" id="CHEBI:29973"/>
        <dbReference type="ChEBI" id="CHEBI:30011"/>
        <dbReference type="EC" id="3.5.1.44"/>
    </reaction>
</comment>
<comment type="subcellular location">
    <subcellularLocation>
        <location evidence="1">Cytoplasm</location>
    </subcellularLocation>
</comment>
<comment type="domain">
    <text evidence="1">Contains a C-terminal catalytic domain, and an N-terminal region which modulates catalytic activity.</text>
</comment>
<comment type="PTM">
    <text evidence="1">Phosphorylated by CheA. Phosphorylation of the N-terminal regulatory domain activates the methylesterase activity.</text>
</comment>
<comment type="similarity">
    <text evidence="1">Belongs to the CheB family.</text>
</comment>